<proteinExistence type="evidence at protein level"/>
<reference key="1">
    <citation type="journal article" date="2002" name="Nature">
        <title>The genome sequence of Schizosaccharomyces pombe.</title>
        <authorList>
            <person name="Wood V."/>
            <person name="Gwilliam R."/>
            <person name="Rajandream M.A."/>
            <person name="Lyne M.H."/>
            <person name="Lyne R."/>
            <person name="Stewart A."/>
            <person name="Sgouros J.G."/>
            <person name="Peat N."/>
            <person name="Hayles J."/>
            <person name="Baker S.G."/>
            <person name="Basham D."/>
            <person name="Bowman S."/>
            <person name="Brooks K."/>
            <person name="Brown D."/>
            <person name="Brown S."/>
            <person name="Chillingworth T."/>
            <person name="Churcher C.M."/>
            <person name="Collins M."/>
            <person name="Connor R."/>
            <person name="Cronin A."/>
            <person name="Davis P."/>
            <person name="Feltwell T."/>
            <person name="Fraser A."/>
            <person name="Gentles S."/>
            <person name="Goble A."/>
            <person name="Hamlin N."/>
            <person name="Harris D.E."/>
            <person name="Hidalgo J."/>
            <person name="Hodgson G."/>
            <person name="Holroyd S."/>
            <person name="Hornsby T."/>
            <person name="Howarth S."/>
            <person name="Huckle E.J."/>
            <person name="Hunt S."/>
            <person name="Jagels K."/>
            <person name="James K.D."/>
            <person name="Jones L."/>
            <person name="Jones M."/>
            <person name="Leather S."/>
            <person name="McDonald S."/>
            <person name="McLean J."/>
            <person name="Mooney P."/>
            <person name="Moule S."/>
            <person name="Mungall K.L."/>
            <person name="Murphy L.D."/>
            <person name="Niblett D."/>
            <person name="Odell C."/>
            <person name="Oliver K."/>
            <person name="O'Neil S."/>
            <person name="Pearson D."/>
            <person name="Quail M.A."/>
            <person name="Rabbinowitsch E."/>
            <person name="Rutherford K.M."/>
            <person name="Rutter S."/>
            <person name="Saunders D."/>
            <person name="Seeger K."/>
            <person name="Sharp S."/>
            <person name="Skelton J."/>
            <person name="Simmonds M.N."/>
            <person name="Squares R."/>
            <person name="Squares S."/>
            <person name="Stevens K."/>
            <person name="Taylor K."/>
            <person name="Taylor R.G."/>
            <person name="Tivey A."/>
            <person name="Walsh S.V."/>
            <person name="Warren T."/>
            <person name="Whitehead S."/>
            <person name="Woodward J.R."/>
            <person name="Volckaert G."/>
            <person name="Aert R."/>
            <person name="Robben J."/>
            <person name="Grymonprez B."/>
            <person name="Weltjens I."/>
            <person name="Vanstreels E."/>
            <person name="Rieger M."/>
            <person name="Schaefer M."/>
            <person name="Mueller-Auer S."/>
            <person name="Gabel C."/>
            <person name="Fuchs M."/>
            <person name="Duesterhoeft A."/>
            <person name="Fritzc C."/>
            <person name="Holzer E."/>
            <person name="Moestl D."/>
            <person name="Hilbert H."/>
            <person name="Borzym K."/>
            <person name="Langer I."/>
            <person name="Beck A."/>
            <person name="Lehrach H."/>
            <person name="Reinhardt R."/>
            <person name="Pohl T.M."/>
            <person name="Eger P."/>
            <person name="Zimmermann W."/>
            <person name="Wedler H."/>
            <person name="Wambutt R."/>
            <person name="Purnelle B."/>
            <person name="Goffeau A."/>
            <person name="Cadieu E."/>
            <person name="Dreano S."/>
            <person name="Gloux S."/>
            <person name="Lelaure V."/>
            <person name="Mottier S."/>
            <person name="Galibert F."/>
            <person name="Aves S.J."/>
            <person name="Xiang Z."/>
            <person name="Hunt C."/>
            <person name="Moore K."/>
            <person name="Hurst S.M."/>
            <person name="Lucas M."/>
            <person name="Rochet M."/>
            <person name="Gaillardin C."/>
            <person name="Tallada V.A."/>
            <person name="Garzon A."/>
            <person name="Thode G."/>
            <person name="Daga R.R."/>
            <person name="Cruzado L."/>
            <person name="Jimenez J."/>
            <person name="Sanchez M."/>
            <person name="del Rey F."/>
            <person name="Benito J."/>
            <person name="Dominguez A."/>
            <person name="Revuelta J.L."/>
            <person name="Moreno S."/>
            <person name="Armstrong J."/>
            <person name="Forsburg S.L."/>
            <person name="Cerutti L."/>
            <person name="Lowe T."/>
            <person name="McCombie W.R."/>
            <person name="Paulsen I."/>
            <person name="Potashkin J."/>
            <person name="Shpakovski G.V."/>
            <person name="Ussery D."/>
            <person name="Barrell B.G."/>
            <person name="Nurse P."/>
        </authorList>
    </citation>
    <scope>NUCLEOTIDE SEQUENCE [LARGE SCALE GENOMIC DNA]</scope>
    <source>
        <strain>972 / ATCC 24843</strain>
    </source>
</reference>
<reference key="2">
    <citation type="journal article" date="2002" name="Mol. Cell. Biol.">
        <title>Proteomics analysis reveals stable multiprotein complexes in both fission and budding yeasts containing Myb-related Cdc5p/Cef1p, novel pre-mRNA splicing factors, and snRNAs.</title>
        <authorList>
            <person name="Ohi M.D."/>
            <person name="Link A.J."/>
            <person name="Ren L."/>
            <person name="Jennings J.L."/>
            <person name="McDonald W.H."/>
            <person name="Gould K.L."/>
        </authorList>
    </citation>
    <scope>IDENTIFICATION IN THE CWF COMPLEX</scope>
    <scope>IDENTIFICATION BY MASS SPECTROMETRY</scope>
</reference>
<reference key="3">
    <citation type="journal article" date="2006" name="Nat. Biotechnol.">
        <title>ORFeome cloning and global analysis of protein localization in the fission yeast Schizosaccharomyces pombe.</title>
        <authorList>
            <person name="Matsuyama A."/>
            <person name="Arai R."/>
            <person name="Yashiroda Y."/>
            <person name="Shirai A."/>
            <person name="Kamata A."/>
            <person name="Sekido S."/>
            <person name="Kobayashi Y."/>
            <person name="Hashimoto A."/>
            <person name="Hamamoto M."/>
            <person name="Hiraoka Y."/>
            <person name="Horinouchi S."/>
            <person name="Yoshida M."/>
        </authorList>
    </citation>
    <scope>SUBCELLULAR LOCATION [LARGE SCALE ANALYSIS]</scope>
</reference>
<evidence type="ECO:0000250" key="1">
    <source>
        <dbReference type="UniProtKB" id="P62306"/>
    </source>
</evidence>
<evidence type="ECO:0000255" key="2">
    <source>
        <dbReference type="PROSITE-ProRule" id="PRU01346"/>
    </source>
</evidence>
<evidence type="ECO:0000269" key="3">
    <source>
    </source>
</evidence>
<evidence type="ECO:0000269" key="4">
    <source>
    </source>
</evidence>
<evidence type="ECO:0000305" key="5"/>
<evidence type="ECO:0007829" key="6">
    <source>
        <dbReference type="PDB" id="9ESI"/>
    </source>
</evidence>
<accession>O59734</accession>
<comment type="function">
    <text evidence="1">Plays a role in pre-mRNA splicing as a core component of the spliceosomal U1, U2, U4 and U5 small nuclear ribonucleoproteins (snRNPs), the building blocks of the spliceosome (By similarity).</text>
</comment>
<comment type="subunit">
    <text evidence="3">Belongs to the 40S cdc5-associated complex (or cwf complex), a spliceosome sub-complex reminiscent of a late-stage spliceosome composed of the U2, U5 and U6 snRNAs and at least brr2, cdc5, cwf2/prp3, cwf3/syf1, cwf4/syf3, cwf5/ecm2, spp42/cwf6, cwf7/spf27, cwf8, cwf9, cwf10, cwf11, cwf12, prp45/cwf13, cwf14, cwf15, cwf16, cwf17, cwf18, cwf19, cwf20, cwf21, cwf22, cwf23, cwf24, cwf25, cwf26, cyp7/cwf27, cwf28, cwf29/ist3, lea1, msl1, prp5/cwf1, prp10, prp12/sap130, prp17, prp22, sap61, sap62, sap114, sap145, slu7, smb1, smd1, smd3, smf1, smg1 and syf2.</text>
</comment>
<comment type="subcellular location">
    <subcellularLocation>
        <location evidence="4">Nucleus</location>
    </subcellularLocation>
    <subcellularLocation>
        <location evidence="4">Cytoplasm</location>
    </subcellularLocation>
</comment>
<comment type="similarity">
    <text evidence="5">Belongs to the snRNP Sm proteins family. SmF/LSm6 subfamily.</text>
</comment>
<feature type="chain" id="PRO_0000125543" description="Small nuclear ribonucleoprotein F">
    <location>
        <begin position="1"/>
        <end position="78"/>
    </location>
</feature>
<feature type="domain" description="Sm" evidence="2">
    <location>
        <begin position="7"/>
        <end position="78"/>
    </location>
</feature>
<feature type="helix" evidence="6">
    <location>
        <begin position="8"/>
        <end position="13"/>
    </location>
</feature>
<feature type="turn" evidence="6">
    <location>
        <begin position="14"/>
        <end position="17"/>
    </location>
</feature>
<feature type="strand" evidence="6">
    <location>
        <begin position="19"/>
        <end position="24"/>
    </location>
</feature>
<feature type="strand" evidence="6">
    <location>
        <begin position="27"/>
        <end position="37"/>
    </location>
</feature>
<feature type="strand" evidence="6">
    <location>
        <begin position="43"/>
        <end position="52"/>
    </location>
</feature>
<feature type="strand" evidence="6">
    <location>
        <begin position="55"/>
        <end position="65"/>
    </location>
</feature>
<feature type="turn" evidence="6">
    <location>
        <begin position="67"/>
        <end position="69"/>
    </location>
</feature>
<feature type="strand" evidence="6">
    <location>
        <begin position="70"/>
        <end position="74"/>
    </location>
</feature>
<protein>
    <recommendedName>
        <fullName>Small nuclear ribonucleoprotein F</fullName>
        <shortName>snRNP-F</shortName>
    </recommendedName>
    <alternativeName>
        <fullName>Sm protein F</fullName>
        <shortName>Sm-F</shortName>
        <shortName>SmF</shortName>
    </alternativeName>
</protein>
<organism>
    <name type="scientific">Schizosaccharomyces pombe (strain 972 / ATCC 24843)</name>
    <name type="common">Fission yeast</name>
    <dbReference type="NCBI Taxonomy" id="284812"/>
    <lineage>
        <taxon>Eukaryota</taxon>
        <taxon>Fungi</taxon>
        <taxon>Dikarya</taxon>
        <taxon>Ascomycota</taxon>
        <taxon>Taphrinomycotina</taxon>
        <taxon>Schizosaccharomycetes</taxon>
        <taxon>Schizosaccharomycetales</taxon>
        <taxon>Schizosaccharomycetaceae</taxon>
        <taxon>Schizosaccharomyces</taxon>
    </lineage>
</organism>
<dbReference type="EMBL" id="CU329671">
    <property type="protein sequence ID" value="CAA19017.1"/>
    <property type="molecule type" value="Genomic_DNA"/>
</dbReference>
<dbReference type="PIR" id="T40388">
    <property type="entry name" value="T40388"/>
</dbReference>
<dbReference type="RefSeq" id="NP_596101.1">
    <property type="nucleotide sequence ID" value="NM_001022017.2"/>
</dbReference>
<dbReference type="PDB" id="3JB9">
    <property type="method" value="EM"/>
    <property type="resolution" value="3.60 A"/>
    <property type="chains" value="I/n=1-78"/>
</dbReference>
<dbReference type="PDB" id="9ESH">
    <property type="method" value="EM"/>
    <property type="resolution" value="3.20 A"/>
    <property type="chains" value="I=1-78"/>
</dbReference>
<dbReference type="PDB" id="9ESI">
    <property type="method" value="EM"/>
    <property type="resolution" value="3.10 A"/>
    <property type="chains" value="I=1-78"/>
</dbReference>
<dbReference type="PDBsum" id="3JB9"/>
<dbReference type="PDBsum" id="9ESH"/>
<dbReference type="PDBsum" id="9ESI"/>
<dbReference type="EMDB" id="EMD-19941"/>
<dbReference type="EMDB" id="EMD-19942"/>
<dbReference type="SMR" id="O59734"/>
<dbReference type="BioGRID" id="276860">
    <property type="interactions" value="19"/>
</dbReference>
<dbReference type="FunCoup" id="O59734">
    <property type="interactions" value="468"/>
</dbReference>
<dbReference type="IntAct" id="O59734">
    <property type="interactions" value="4"/>
</dbReference>
<dbReference type="STRING" id="284812.O59734"/>
<dbReference type="PaxDb" id="4896-SPBC3E7.14.1"/>
<dbReference type="EnsemblFungi" id="SPBC3E7.14.1">
    <property type="protein sequence ID" value="SPBC3E7.14.1:pep"/>
    <property type="gene ID" value="SPBC3E7.14"/>
</dbReference>
<dbReference type="GeneID" id="2540330"/>
<dbReference type="KEGG" id="spo:2540330"/>
<dbReference type="PomBase" id="SPBC3E7.14">
    <property type="gene designation" value="smf1"/>
</dbReference>
<dbReference type="VEuPathDB" id="FungiDB:SPBC3E7.14"/>
<dbReference type="eggNOG" id="KOG3482">
    <property type="taxonomic scope" value="Eukaryota"/>
</dbReference>
<dbReference type="HOGENOM" id="CLU_076902_12_3_1"/>
<dbReference type="InParanoid" id="O59734"/>
<dbReference type="OMA" id="GYMNVQL"/>
<dbReference type="PhylomeDB" id="O59734"/>
<dbReference type="Reactome" id="R-SPO-72163">
    <property type="pathway name" value="mRNA Splicing - Major Pathway"/>
</dbReference>
<dbReference type="EvolutionaryTrace" id="O59734"/>
<dbReference type="PRO" id="PR:O59734"/>
<dbReference type="Proteomes" id="UP000002485">
    <property type="component" value="Chromosome II"/>
</dbReference>
<dbReference type="GO" id="GO:0071013">
    <property type="term" value="C:catalytic step 2 spliceosome"/>
    <property type="evidence" value="ECO:0000318"/>
    <property type="project" value="GO_Central"/>
</dbReference>
<dbReference type="GO" id="GO:0005829">
    <property type="term" value="C:cytosol"/>
    <property type="evidence" value="ECO:0007005"/>
    <property type="project" value="PomBase"/>
</dbReference>
<dbReference type="GO" id="GO:0005634">
    <property type="term" value="C:nucleus"/>
    <property type="evidence" value="ECO:0007005"/>
    <property type="project" value="PomBase"/>
</dbReference>
<dbReference type="GO" id="GO:0034715">
    <property type="term" value="C:pICln-Sm protein complex"/>
    <property type="evidence" value="ECO:0000318"/>
    <property type="project" value="GO_Central"/>
</dbReference>
<dbReference type="GO" id="GO:0071014">
    <property type="term" value="C:post-mRNA release spliceosomal complex"/>
    <property type="evidence" value="ECO:0000314"/>
    <property type="project" value="PomBase"/>
</dbReference>
<dbReference type="GO" id="GO:0005681">
    <property type="term" value="C:spliceosomal complex"/>
    <property type="evidence" value="ECO:0000314"/>
    <property type="project" value="PomBase"/>
</dbReference>
<dbReference type="GO" id="GO:0005685">
    <property type="term" value="C:U1 snRNP"/>
    <property type="evidence" value="ECO:0000314"/>
    <property type="project" value="PomBase"/>
</dbReference>
<dbReference type="GO" id="GO:0005686">
    <property type="term" value="C:U2 snRNP"/>
    <property type="evidence" value="ECO:0000314"/>
    <property type="project" value="PomBase"/>
</dbReference>
<dbReference type="GO" id="GO:0046540">
    <property type="term" value="C:U4/U6 x U5 tri-snRNP complex"/>
    <property type="evidence" value="ECO:0000266"/>
    <property type="project" value="PomBase"/>
</dbReference>
<dbReference type="GO" id="GO:0005682">
    <property type="term" value="C:U5 snRNP"/>
    <property type="evidence" value="ECO:0000314"/>
    <property type="project" value="PomBase"/>
</dbReference>
<dbReference type="GO" id="GO:0003723">
    <property type="term" value="F:RNA binding"/>
    <property type="evidence" value="ECO:0000318"/>
    <property type="project" value="GO_Central"/>
</dbReference>
<dbReference type="GO" id="GO:0000395">
    <property type="term" value="P:mRNA 5'-splice site recognition"/>
    <property type="evidence" value="ECO:0000305"/>
    <property type="project" value="PomBase"/>
</dbReference>
<dbReference type="GO" id="GO:0045292">
    <property type="term" value="P:mRNA cis splicing, via spliceosome"/>
    <property type="evidence" value="ECO:0000269"/>
    <property type="project" value="PomBase"/>
</dbReference>
<dbReference type="GO" id="GO:0000398">
    <property type="term" value="P:mRNA splicing, via spliceosome"/>
    <property type="evidence" value="ECO:0000318"/>
    <property type="project" value="GO_Central"/>
</dbReference>
<dbReference type="CDD" id="cd01722">
    <property type="entry name" value="Sm_F"/>
    <property type="match status" value="1"/>
</dbReference>
<dbReference type="FunFam" id="2.30.30.100:FF:000133">
    <property type="entry name" value="Small nuclear ribonucleoprotein F"/>
    <property type="match status" value="1"/>
</dbReference>
<dbReference type="Gene3D" id="2.30.30.100">
    <property type="match status" value="1"/>
</dbReference>
<dbReference type="InterPro" id="IPR016487">
    <property type="entry name" value="Lsm6/sSmF"/>
</dbReference>
<dbReference type="InterPro" id="IPR010920">
    <property type="entry name" value="LSM_dom_sf"/>
</dbReference>
<dbReference type="InterPro" id="IPR047575">
    <property type="entry name" value="Sm"/>
</dbReference>
<dbReference type="InterPro" id="IPR001163">
    <property type="entry name" value="Sm_dom_euk/arc"/>
</dbReference>
<dbReference type="InterPro" id="IPR034100">
    <property type="entry name" value="Sm_F"/>
</dbReference>
<dbReference type="PANTHER" id="PTHR11021:SF0">
    <property type="entry name" value="SMALL NUCLEAR RIBONUCLEOPROTEIN F"/>
    <property type="match status" value="1"/>
</dbReference>
<dbReference type="PANTHER" id="PTHR11021">
    <property type="entry name" value="SMALL NUCLEAR RIBONUCLEOPROTEIN F SNRNP-F"/>
    <property type="match status" value="1"/>
</dbReference>
<dbReference type="Pfam" id="PF01423">
    <property type="entry name" value="LSM"/>
    <property type="match status" value="1"/>
</dbReference>
<dbReference type="PIRSF" id="PIRSF006609">
    <property type="entry name" value="snRNP_SmF"/>
    <property type="match status" value="1"/>
</dbReference>
<dbReference type="SMART" id="SM00651">
    <property type="entry name" value="Sm"/>
    <property type="match status" value="1"/>
</dbReference>
<dbReference type="SUPFAM" id="SSF50182">
    <property type="entry name" value="Sm-like ribonucleoproteins"/>
    <property type="match status" value="1"/>
</dbReference>
<dbReference type="PROSITE" id="PS52002">
    <property type="entry name" value="SM"/>
    <property type="match status" value="1"/>
</dbReference>
<gene>
    <name type="primary">smf1</name>
    <name type="ORF">SPBC3E7.14</name>
    <name type="ORF">SPBC4F6.01</name>
</gene>
<name>RUXF_SCHPO</name>
<keyword id="KW-0002">3D-structure</keyword>
<keyword id="KW-0963">Cytoplasm</keyword>
<keyword id="KW-0507">mRNA processing</keyword>
<keyword id="KW-0508">mRNA splicing</keyword>
<keyword id="KW-0539">Nucleus</keyword>
<keyword id="KW-1185">Reference proteome</keyword>
<keyword id="KW-0687">Ribonucleoprotein</keyword>
<keyword id="KW-0694">RNA-binding</keyword>
<keyword id="KW-0747">Spliceosome</keyword>
<sequence>MSFVPVNPKPFLQGLIGKPVLVRLKWGQEYKGTLQSVDSYMNLQLLNAEELVDGVKTGDLGEILIRCNNVLWVGESTV</sequence>